<comment type="function">
    <text evidence="1">Catalyzes the hydroxylation of urate to 5-hydroxyisourate (HIU).</text>
</comment>
<comment type="catalytic activity">
    <reaction evidence="1">
        <text>urate + NADH + O2 + H(+) = 5-hydroxyisourate + NAD(+) + H2O</text>
        <dbReference type="Rhea" id="RHEA:27329"/>
        <dbReference type="ChEBI" id="CHEBI:15377"/>
        <dbReference type="ChEBI" id="CHEBI:15378"/>
        <dbReference type="ChEBI" id="CHEBI:15379"/>
        <dbReference type="ChEBI" id="CHEBI:17775"/>
        <dbReference type="ChEBI" id="CHEBI:18072"/>
        <dbReference type="ChEBI" id="CHEBI:57540"/>
        <dbReference type="ChEBI" id="CHEBI:57945"/>
        <dbReference type="EC" id="1.14.13.113"/>
    </reaction>
</comment>
<comment type="cofactor">
    <cofactor evidence="1">
        <name>FAD</name>
        <dbReference type="ChEBI" id="CHEBI:57692"/>
    </cofactor>
</comment>
<comment type="biophysicochemical properties">
    <kinetics>
        <KM evidence="1">42 uM for urate</KM>
        <text evidence="1">kcat is 42 sec(-1).</text>
    </kinetics>
</comment>
<comment type="pathway">
    <text evidence="1">Purine metabolism; urate degradation.</text>
</comment>
<comment type="subunit">
    <text evidence="2">Monomer.</text>
</comment>
<comment type="similarity">
    <text evidence="4">Belongs to the FAD-dependent urate hydroxylase family.</text>
</comment>
<gene>
    <name evidence="3" type="primary">hpxO</name>
    <name type="ordered locus">KPN78578_16330</name>
    <name type="ORF">KPN_01663</name>
</gene>
<feature type="chain" id="PRO_0000418845" description="FAD-dependent urate hydroxylase">
    <location>
        <begin position="1"/>
        <end position="384"/>
    </location>
</feature>
<feature type="binding site" evidence="2 7 8 9">
    <location>
        <position position="11"/>
    </location>
    <ligand>
        <name>FAD</name>
        <dbReference type="ChEBI" id="CHEBI:57692"/>
    </ligand>
</feature>
<feature type="binding site" evidence="2 7 8 9">
    <location>
        <begin position="30"/>
        <end position="31"/>
    </location>
    <ligand>
        <name>FAD</name>
        <dbReference type="ChEBI" id="CHEBI:57692"/>
    </ligand>
</feature>
<feature type="binding site" evidence="2 7 8 9">
    <location>
        <position position="43"/>
    </location>
    <ligand>
        <name>FAD</name>
        <dbReference type="ChEBI" id="CHEBI:57692"/>
    </ligand>
</feature>
<feature type="binding site" evidence="2 7 8 9">
    <location>
        <position position="125"/>
    </location>
    <ligand>
        <name>FAD</name>
        <dbReference type="ChEBI" id="CHEBI:57692"/>
    </ligand>
</feature>
<feature type="binding site" evidence="2 8">
    <location>
        <position position="178"/>
    </location>
    <ligand>
        <name>substrate</name>
    </ligand>
</feature>
<feature type="binding site" evidence="2 8">
    <location>
        <position position="204"/>
    </location>
    <ligand>
        <name>substrate</name>
    </ligand>
</feature>
<feature type="binding site" evidence="2 8">
    <location>
        <begin position="216"/>
        <end position="218"/>
    </location>
    <ligand>
        <name>substrate</name>
    </ligand>
</feature>
<feature type="binding site" evidence="2 7 8 9">
    <location>
        <position position="285"/>
    </location>
    <ligand>
        <name>FAD</name>
        <dbReference type="ChEBI" id="CHEBI:57692"/>
    </ligand>
</feature>
<feature type="binding site" evidence="2 7 8 9">
    <location>
        <begin position="295"/>
        <end position="299"/>
    </location>
    <ligand>
        <name>FAD</name>
        <dbReference type="ChEBI" id="CHEBI:57692"/>
    </ligand>
</feature>
<feature type="site" description="Involved in substrate activation for the transfer of oxygen from the flavin hydroperoxide" evidence="6">
    <location>
        <position position="204"/>
    </location>
</feature>
<feature type="mutagenesis site" description="160-fold decrease in catalytic activity. Results in the uncoupling of the NADH oxidation and urate hydroxylation reactions." evidence="2">
    <original>R</original>
    <variation>Q</variation>
    <location>
        <position position="204"/>
    </location>
</feature>
<feature type="mutagenesis site" description="5-fold decrease in catalytic activity. 2-fold decrease in affinity for urate and increase in affinity for NADH." evidence="2">
    <original>Y</original>
    <variation>F</variation>
    <location>
        <position position="216"/>
    </location>
</feature>
<feature type="strand" evidence="10">
    <location>
        <begin position="2"/>
        <end position="6"/>
    </location>
</feature>
<feature type="helix" evidence="10">
    <location>
        <begin position="10"/>
        <end position="21"/>
    </location>
</feature>
<feature type="strand" evidence="10">
    <location>
        <begin position="25"/>
        <end position="33"/>
    </location>
</feature>
<feature type="strand" evidence="10">
    <location>
        <begin position="41"/>
        <end position="44"/>
    </location>
</feature>
<feature type="helix" evidence="10">
    <location>
        <begin position="46"/>
        <end position="54"/>
    </location>
</feature>
<feature type="helix" evidence="10">
    <location>
        <begin position="58"/>
        <end position="64"/>
    </location>
</feature>
<feature type="strand" evidence="10">
    <location>
        <begin position="70"/>
        <end position="75"/>
    </location>
</feature>
<feature type="turn" evidence="10">
    <location>
        <begin position="76"/>
        <end position="78"/>
    </location>
</feature>
<feature type="strand" evidence="10">
    <location>
        <begin position="81"/>
        <end position="86"/>
    </location>
</feature>
<feature type="helix" evidence="10">
    <location>
        <begin position="88"/>
        <end position="94"/>
    </location>
</feature>
<feature type="strand" evidence="10">
    <location>
        <begin position="99"/>
        <end position="102"/>
    </location>
</feature>
<feature type="helix" evidence="10">
    <location>
        <begin position="103"/>
        <end position="114"/>
    </location>
</feature>
<feature type="helix" evidence="10">
    <location>
        <begin position="116"/>
        <end position="118"/>
    </location>
</feature>
<feature type="strand" evidence="10">
    <location>
        <begin position="119"/>
        <end position="122"/>
    </location>
</feature>
<feature type="strand" evidence="10">
    <location>
        <begin position="125"/>
        <end position="131"/>
    </location>
</feature>
<feature type="strand" evidence="10">
    <location>
        <begin position="134"/>
        <end position="139"/>
    </location>
</feature>
<feature type="strand" evidence="10">
    <location>
        <begin position="144"/>
        <end position="152"/>
    </location>
</feature>
<feature type="helix" evidence="10">
    <location>
        <begin position="161"/>
        <end position="165"/>
    </location>
</feature>
<feature type="strand" evidence="10">
    <location>
        <begin position="172"/>
        <end position="184"/>
    </location>
</feature>
<feature type="turn" evidence="10">
    <location>
        <begin position="187"/>
        <end position="189"/>
    </location>
</feature>
<feature type="strand" evidence="10">
    <location>
        <begin position="194"/>
        <end position="200"/>
    </location>
</feature>
<feature type="strand" evidence="10">
    <location>
        <begin position="203"/>
        <end position="210"/>
    </location>
</feature>
<feature type="turn" evidence="10">
    <location>
        <begin position="211"/>
        <end position="213"/>
    </location>
</feature>
<feature type="strand" evidence="10">
    <location>
        <begin position="214"/>
        <end position="222"/>
    </location>
</feature>
<feature type="turn" evidence="10">
    <location>
        <begin position="231"/>
        <end position="233"/>
    </location>
</feature>
<feature type="helix" evidence="10">
    <location>
        <begin position="234"/>
        <end position="241"/>
    </location>
</feature>
<feature type="turn" evidence="10">
    <location>
        <begin position="242"/>
        <end position="244"/>
    </location>
</feature>
<feature type="helix" evidence="10">
    <location>
        <begin position="247"/>
        <end position="255"/>
    </location>
</feature>
<feature type="helix" evidence="10">
    <location>
        <begin position="258"/>
        <end position="260"/>
    </location>
</feature>
<feature type="strand" evidence="10">
    <location>
        <begin position="262"/>
        <end position="268"/>
    </location>
</feature>
<feature type="strand" evidence="10">
    <location>
        <begin position="280"/>
        <end position="282"/>
    </location>
</feature>
<feature type="helix" evidence="10">
    <location>
        <begin position="284"/>
        <end position="286"/>
    </location>
</feature>
<feature type="helix" evidence="10">
    <location>
        <begin position="292"/>
        <end position="294"/>
    </location>
</feature>
<feature type="helix" evidence="10">
    <location>
        <begin position="297"/>
        <end position="313"/>
    </location>
</feature>
<feature type="helix" evidence="10">
    <location>
        <begin position="318"/>
        <end position="347"/>
    </location>
</feature>
<feature type="turn" evidence="10">
    <location>
        <begin position="348"/>
        <end position="351"/>
    </location>
</feature>
<feature type="helix" evidence="10">
    <location>
        <begin position="352"/>
        <end position="363"/>
    </location>
</feature>
<feature type="helix" evidence="10">
    <location>
        <begin position="368"/>
        <end position="379"/>
    </location>
</feature>
<sequence>MKAIVIGAGIGGLSAAVALKQSGIDCDVYEAVKEIKPVGAAISVWPNGVKCMAHLGMGDIMETFGGPLRRMAYRDFRSGENMTQFSLAPLIERTGSRPCPVSRAELQREMLDYWGRDSVQFGKRVTRCEEDADGVTVWFTDGSSASGDLLIAADGSHSALRPWVLGFTPQRRYAGYVNWNGLVEIDEALAPGDQWTTFVGEGKRVSLMPVSAGRFYFFFDVPLPAGLAEDRDTLRADLSRYFAGWAPPVQKLIAALDPQTTNRIEIHDIEPFSRLVRGRVALLGDAGHSTTPDIGQGGCAAMEDAVVLGAVFRQTRDIAAALREYEAQRCDRVRDLVLKARKRCDITHGKDMQLTEAWYQELREETGERIINGMCDTILSGPLG</sequence>
<reference key="1">
    <citation type="submission" date="2006-09" db="EMBL/GenBank/DDBJ databases">
        <authorList>
            <consortium name="The Klebsiella pneumonia Genome Sequencing Project"/>
            <person name="McClelland M."/>
            <person name="Sanderson E.K."/>
            <person name="Spieth J."/>
            <person name="Clifton W.S."/>
            <person name="Latreille P."/>
            <person name="Sabo A."/>
            <person name="Pepin K."/>
            <person name="Bhonagiri V."/>
            <person name="Porwollik S."/>
            <person name="Ali J."/>
            <person name="Wilson R.K."/>
        </authorList>
    </citation>
    <scope>NUCLEOTIDE SEQUENCE [LARGE SCALE GENOMIC DNA]</scope>
    <source>
        <strain>ATCC 700721 / MGH 78578</strain>
    </source>
</reference>
<reference key="2">
    <citation type="journal article" date="2009" name="Biochemistry">
        <title>Biochemical characterization of the HpxO enzyme from Klebsiella pneumoniae, a novel FAD-dependent urate oxidase.</title>
        <authorList>
            <person name="O'Leary S.E."/>
            <person name="Hicks K.A."/>
            <person name="Ealick S.E."/>
            <person name="Begley T.P."/>
        </authorList>
    </citation>
    <scope>FUNCTION</scope>
    <scope>CATALYTIC ACTIVITY</scope>
    <scope>COFACTOR</scope>
    <scope>BIOPHYSICOCHEMICAL PROPERTIES</scope>
    <scope>PATHWAY</scope>
    <source>
        <strain>ATCC 700721 / MGH 78578</strain>
    </source>
</reference>
<reference key="3">
    <citation type="journal article" date="2013" name="Biochemistry">
        <title>Structural and mechanistic studies of HpxO, a novel flavin adenine dinucleotide-dependent urate oxidase from Klebsiella pneumoniae.</title>
        <authorList>
            <person name="Hicks K.A."/>
            <person name="O'Leary S.E."/>
            <person name="Begley T.P."/>
            <person name="Ealick S.E."/>
        </authorList>
    </citation>
    <scope>X-RAY CRYSTALLOGRAPHY (1.97 ANGSTROMS) OF WILD-TYPE AND MUTANT GLN-204 IN COMPLEXES WITH URATE AND FAD</scope>
    <scope>SUBUNIT</scope>
    <scope>REACTION MECHANISM</scope>
    <scope>MUTAGENESIS OF ARG-204 AND TYR-216</scope>
    <source>
        <strain>ATCC 700721 / MGH 78578</strain>
    </source>
</reference>
<protein>
    <recommendedName>
        <fullName evidence="5">FAD-dependent urate hydroxylase</fullName>
        <ecNumber evidence="1">1.14.13.113</ecNumber>
    </recommendedName>
    <alternativeName>
        <fullName evidence="3">FAD-dependent urate oxidase</fullName>
    </alternativeName>
</protein>
<accession>A6T923</accession>
<keyword id="KW-0002">3D-structure</keyword>
<keyword id="KW-0274">FAD</keyword>
<keyword id="KW-0285">Flavoprotein</keyword>
<keyword id="KW-0503">Monooxygenase</keyword>
<keyword id="KW-0520">NAD</keyword>
<keyword id="KW-0560">Oxidoreductase</keyword>
<keyword id="KW-0659">Purine metabolism</keyword>
<dbReference type="EC" id="1.14.13.113" evidence="1"/>
<dbReference type="EMBL" id="CP000647">
    <property type="protein sequence ID" value="ABR77094.1"/>
    <property type="molecule type" value="Genomic_DNA"/>
</dbReference>
<dbReference type="RefSeq" id="WP_002904783.1">
    <property type="nucleotide sequence ID" value="NC_009648.1"/>
</dbReference>
<dbReference type="PDB" id="3RP6">
    <property type="method" value="X-ray"/>
    <property type="resolution" value="2.20 A"/>
    <property type="chains" value="A=1-384"/>
</dbReference>
<dbReference type="PDB" id="3RP7">
    <property type="method" value="X-ray"/>
    <property type="resolution" value="2.04 A"/>
    <property type="chains" value="A=1-384"/>
</dbReference>
<dbReference type="PDB" id="3RP8">
    <property type="method" value="X-ray"/>
    <property type="resolution" value="1.97 A"/>
    <property type="chains" value="A=1-384"/>
</dbReference>
<dbReference type="PDBsum" id="3RP6"/>
<dbReference type="PDBsum" id="3RP7"/>
<dbReference type="PDBsum" id="3RP8"/>
<dbReference type="SMR" id="A6T923"/>
<dbReference type="STRING" id="272620.KPN_01663"/>
<dbReference type="PaxDb" id="272620-KPN_01663"/>
<dbReference type="EnsemblBacteria" id="ABR77094">
    <property type="protein sequence ID" value="ABR77094"/>
    <property type="gene ID" value="KPN_01663"/>
</dbReference>
<dbReference type="KEGG" id="kpn:KPN_01663"/>
<dbReference type="HOGENOM" id="CLU_009665_19_5_6"/>
<dbReference type="BRENDA" id="1.14.13.113">
    <property type="organism ID" value="2814"/>
</dbReference>
<dbReference type="UniPathway" id="UPA00394"/>
<dbReference type="EvolutionaryTrace" id="A6T923"/>
<dbReference type="Proteomes" id="UP000000265">
    <property type="component" value="Chromosome"/>
</dbReference>
<dbReference type="GO" id="GO:0071949">
    <property type="term" value="F:FAD binding"/>
    <property type="evidence" value="ECO:0000314"/>
    <property type="project" value="UniProtKB"/>
</dbReference>
<dbReference type="GO" id="GO:0102099">
    <property type="term" value="F:FAD-dependent urate hydroxylase activity"/>
    <property type="evidence" value="ECO:0007669"/>
    <property type="project" value="UniProtKB-EC"/>
</dbReference>
<dbReference type="GO" id="GO:0016709">
    <property type="term" value="F:oxidoreductase activity, acting on paired donors, with incorporation or reduction of molecular oxygen, NAD(P)H as one donor, and incorporation of one atom of oxygen"/>
    <property type="evidence" value="ECO:0000314"/>
    <property type="project" value="UniProtKB"/>
</dbReference>
<dbReference type="GO" id="GO:0004846">
    <property type="term" value="F:urate oxidase activity"/>
    <property type="evidence" value="ECO:0000314"/>
    <property type="project" value="CACAO"/>
</dbReference>
<dbReference type="GO" id="GO:0006144">
    <property type="term" value="P:purine nucleobase metabolic process"/>
    <property type="evidence" value="ECO:0007669"/>
    <property type="project" value="UniProtKB-KW"/>
</dbReference>
<dbReference type="GO" id="GO:0019628">
    <property type="term" value="P:urate catabolic process"/>
    <property type="evidence" value="ECO:0000314"/>
    <property type="project" value="UniProtKB"/>
</dbReference>
<dbReference type="FunFam" id="3.50.50.60:FF:000269">
    <property type="entry name" value="FAD-dependent urate hydroxylase"/>
    <property type="match status" value="1"/>
</dbReference>
<dbReference type="Gene3D" id="3.50.50.60">
    <property type="entry name" value="FAD/NAD(P)-binding domain"/>
    <property type="match status" value="1"/>
</dbReference>
<dbReference type="InterPro" id="IPR002938">
    <property type="entry name" value="FAD-bd"/>
</dbReference>
<dbReference type="InterPro" id="IPR050493">
    <property type="entry name" value="FAD-dep_Monooxygenase_BioMet"/>
</dbReference>
<dbReference type="InterPro" id="IPR036188">
    <property type="entry name" value="FAD/NAD-bd_sf"/>
</dbReference>
<dbReference type="InterPro" id="IPR047712">
    <property type="entry name" value="HpxO"/>
</dbReference>
<dbReference type="NCBIfam" id="NF033623">
    <property type="entry name" value="urate_HpxO"/>
    <property type="match status" value="1"/>
</dbReference>
<dbReference type="PANTHER" id="PTHR13789">
    <property type="entry name" value="MONOOXYGENASE"/>
    <property type="match status" value="1"/>
</dbReference>
<dbReference type="PANTHER" id="PTHR13789:SF309">
    <property type="entry name" value="PUTATIVE (AFU_ORTHOLOGUE AFUA_6G14510)-RELATED"/>
    <property type="match status" value="1"/>
</dbReference>
<dbReference type="Pfam" id="PF01494">
    <property type="entry name" value="FAD_binding_3"/>
    <property type="match status" value="1"/>
</dbReference>
<dbReference type="PRINTS" id="PR00420">
    <property type="entry name" value="RNGMNOXGNASE"/>
</dbReference>
<dbReference type="SUPFAM" id="SSF51905">
    <property type="entry name" value="FAD/NAD(P)-binding domain"/>
    <property type="match status" value="1"/>
</dbReference>
<name>HPXO_KLEP7</name>
<proteinExistence type="evidence at protein level"/>
<organism>
    <name type="scientific">Klebsiella pneumoniae subsp. pneumoniae (strain ATCC 700721 / MGH 78578)</name>
    <dbReference type="NCBI Taxonomy" id="272620"/>
    <lineage>
        <taxon>Bacteria</taxon>
        <taxon>Pseudomonadati</taxon>
        <taxon>Pseudomonadota</taxon>
        <taxon>Gammaproteobacteria</taxon>
        <taxon>Enterobacterales</taxon>
        <taxon>Enterobacteriaceae</taxon>
        <taxon>Klebsiella/Raoultella group</taxon>
        <taxon>Klebsiella</taxon>
        <taxon>Klebsiella pneumoniae complex</taxon>
    </lineage>
</organism>
<evidence type="ECO:0000269" key="1">
    <source>
    </source>
</evidence>
<evidence type="ECO:0000269" key="2">
    <source>
    </source>
</evidence>
<evidence type="ECO:0000303" key="3">
    <source>
    </source>
</evidence>
<evidence type="ECO:0000305" key="4"/>
<evidence type="ECO:0000305" key="5">
    <source>
    </source>
</evidence>
<evidence type="ECO:0000305" key="6">
    <source>
    </source>
</evidence>
<evidence type="ECO:0007744" key="7">
    <source>
        <dbReference type="PDB" id="3RP6"/>
    </source>
</evidence>
<evidence type="ECO:0007744" key="8">
    <source>
        <dbReference type="PDB" id="3RP7"/>
    </source>
</evidence>
<evidence type="ECO:0007744" key="9">
    <source>
        <dbReference type="PDB" id="3RP8"/>
    </source>
</evidence>
<evidence type="ECO:0007829" key="10">
    <source>
        <dbReference type="PDB" id="3RP8"/>
    </source>
</evidence>